<organism>
    <name type="scientific">Oryza sativa subsp. japonica</name>
    <name type="common">Rice</name>
    <dbReference type="NCBI Taxonomy" id="39947"/>
    <lineage>
        <taxon>Eukaryota</taxon>
        <taxon>Viridiplantae</taxon>
        <taxon>Streptophyta</taxon>
        <taxon>Embryophyta</taxon>
        <taxon>Tracheophyta</taxon>
        <taxon>Spermatophyta</taxon>
        <taxon>Magnoliopsida</taxon>
        <taxon>Liliopsida</taxon>
        <taxon>Poales</taxon>
        <taxon>Poaceae</taxon>
        <taxon>BOP clade</taxon>
        <taxon>Oryzoideae</taxon>
        <taxon>Oryzeae</taxon>
        <taxon>Oryzinae</taxon>
        <taxon>Oryza</taxon>
        <taxon>Oryza sativa</taxon>
    </lineage>
</organism>
<sequence length="340" mass="35587">MSTPRAAASLAKKAALVALAVLAAALATAARAEQCGAQAGGARCPNCLCCSRWGWCGTTSDFCGDGCQSQCSGCGPTPTPTPPSPSDGVGSIVPRDLFERLLLHRNDGACPARGFYTYEAFLAAAAAFPAFGGTGNTETRKREVAAFLGQTSHETTGGWPTAPDGPFSWGYCFKQEQNPPSDYCQPSPEWPCAPGRKYYGRGPIQLSFNFNYGPAGRAIGVDLLSNPDLVATDATVSFKTALWFWMTPQGNKPSSHDVITGRWAPSPADAAAGRAPGYGVITNIVNGGLECGHGPDDRVANRIGFYQRYCGAFGIGTGGNLDCYNQRPFNSGSSVGLAEQ</sequence>
<accession>Q7DNA1</accession>
<accession>Q0DID3</accession>
<accession>Q43294</accession>
<evidence type="ECO:0000250" key="1">
    <source>
        <dbReference type="UniProtKB" id="P29022"/>
    </source>
</evidence>
<evidence type="ECO:0000255" key="2"/>
<evidence type="ECO:0000255" key="3">
    <source>
        <dbReference type="PROSITE-ProRule" id="PRU00261"/>
    </source>
</evidence>
<evidence type="ECO:0000269" key="4">
    <source>
    </source>
</evidence>
<evidence type="ECO:0000269" key="5">
    <source>
    </source>
</evidence>
<evidence type="ECO:0000269" key="6">
    <source>
    </source>
</evidence>
<evidence type="ECO:0000269" key="7">
    <source>
    </source>
</evidence>
<evidence type="ECO:0000269" key="8">
    <source>
    </source>
</evidence>
<evidence type="ECO:0000305" key="9"/>
<evidence type="ECO:0007829" key="10">
    <source>
        <dbReference type="PDB" id="2DKV"/>
    </source>
</evidence>
<name>CHI2_ORYSJ</name>
<protein>
    <recommendedName>
        <fullName>Chitinase 2</fullName>
        <ecNumber>3.2.1.14</ecNumber>
    </recommendedName>
    <alternativeName>
        <fullName>Class I chitinase b</fullName>
        <shortName>OsChia1b</shortName>
    </alternativeName>
    <alternativeName>
        <fullName>Pathogenesis related (PR)-3 chitinase 2</fullName>
    </alternativeName>
</protein>
<dbReference type="EC" id="3.2.1.14"/>
<dbReference type="EMBL" id="D16222">
    <property type="protein sequence ID" value="BAA03750.1"/>
    <property type="molecule type" value="Genomic_DNA"/>
</dbReference>
<dbReference type="EMBL" id="X56787">
    <property type="protein sequence ID" value="CAA40107.1"/>
    <property type="molecule type" value="mRNA"/>
</dbReference>
<dbReference type="EMBL" id="AP008211">
    <property type="protein sequence ID" value="BAF17390.1"/>
    <property type="status" value="ALT_SEQ"/>
    <property type="molecule type" value="Genomic_DNA"/>
</dbReference>
<dbReference type="EMBL" id="AP014961">
    <property type="status" value="NOT_ANNOTATED_CDS"/>
    <property type="molecule type" value="Genomic_DNA"/>
</dbReference>
<dbReference type="EMBL" id="CM000142">
    <property type="protein sequence ID" value="EEE63650.1"/>
    <property type="molecule type" value="Genomic_DNA"/>
</dbReference>
<dbReference type="PIR" id="S39979">
    <property type="entry name" value="S39979"/>
</dbReference>
<dbReference type="PIR" id="S40414">
    <property type="entry name" value="S40414"/>
</dbReference>
<dbReference type="RefSeq" id="XP_015640432.1">
    <property type="nucleotide sequence ID" value="XM_015784946.1"/>
</dbReference>
<dbReference type="PDB" id="2DKV">
    <property type="method" value="X-ray"/>
    <property type="resolution" value="2.00 A"/>
    <property type="chains" value="A=33-340"/>
</dbReference>
<dbReference type="PDB" id="3IWR">
    <property type="method" value="X-ray"/>
    <property type="resolution" value="2.57 A"/>
    <property type="chains" value="A/B=33-340"/>
</dbReference>
<dbReference type="PDBsum" id="2DKV"/>
<dbReference type="PDBsum" id="3IWR"/>
<dbReference type="SMR" id="Q7DNA1"/>
<dbReference type="FunCoup" id="Q7DNA1">
    <property type="interactions" value="257"/>
</dbReference>
<dbReference type="STRING" id="39947.Q7DNA1"/>
<dbReference type="CAZy" id="CBM18">
    <property type="family name" value="Carbohydrate-Binding Module Family 18"/>
</dbReference>
<dbReference type="CAZy" id="GH19">
    <property type="family name" value="Glycoside Hydrolase Family 19"/>
</dbReference>
<dbReference type="PaxDb" id="39947-Q7DNA1"/>
<dbReference type="EnsemblPlants" id="Os05t0399300-01">
    <property type="protein sequence ID" value="Os05t0399300-01"/>
    <property type="gene ID" value="Os05g0399300"/>
</dbReference>
<dbReference type="Gramene" id="Os05t0399300-01">
    <property type="protein sequence ID" value="Os05t0399300-01"/>
    <property type="gene ID" value="Os05g0399300"/>
</dbReference>
<dbReference type="KEGG" id="dosa:Os05g0399300"/>
<dbReference type="eggNOG" id="KOG4742">
    <property type="taxonomic scope" value="Eukaryota"/>
</dbReference>
<dbReference type="HOGENOM" id="CLU_045506_4_0_1"/>
<dbReference type="InParanoid" id="Q7DNA1"/>
<dbReference type="OrthoDB" id="5985073at2759"/>
<dbReference type="EvolutionaryTrace" id="Q7DNA1"/>
<dbReference type="Proteomes" id="UP000000763">
    <property type="component" value="Chromosome 5"/>
</dbReference>
<dbReference type="Proteomes" id="UP000007752">
    <property type="component" value="Chromosome 5"/>
</dbReference>
<dbReference type="Proteomes" id="UP000059680">
    <property type="component" value="Chromosome 5"/>
</dbReference>
<dbReference type="GO" id="GO:0008061">
    <property type="term" value="F:chitin binding"/>
    <property type="evidence" value="ECO:0007669"/>
    <property type="project" value="UniProtKB-KW"/>
</dbReference>
<dbReference type="GO" id="GO:0004568">
    <property type="term" value="F:chitinase activity"/>
    <property type="evidence" value="ECO:0000314"/>
    <property type="project" value="UniProtKB"/>
</dbReference>
<dbReference type="GO" id="GO:0008843">
    <property type="term" value="F:endochitinase activity"/>
    <property type="evidence" value="ECO:0007669"/>
    <property type="project" value="UniProtKB-EC"/>
</dbReference>
<dbReference type="GO" id="GO:0016998">
    <property type="term" value="P:cell wall macromolecule catabolic process"/>
    <property type="evidence" value="ECO:0007669"/>
    <property type="project" value="InterPro"/>
</dbReference>
<dbReference type="GO" id="GO:0006032">
    <property type="term" value="P:chitin catabolic process"/>
    <property type="evidence" value="ECO:0007669"/>
    <property type="project" value="UniProtKB-KW"/>
</dbReference>
<dbReference type="GO" id="GO:0050832">
    <property type="term" value="P:defense response to fungus"/>
    <property type="evidence" value="ECO:0000314"/>
    <property type="project" value="UniProtKB"/>
</dbReference>
<dbReference type="GO" id="GO:0000272">
    <property type="term" value="P:polysaccharide catabolic process"/>
    <property type="evidence" value="ECO:0007669"/>
    <property type="project" value="UniProtKB-KW"/>
</dbReference>
<dbReference type="CDD" id="cd00325">
    <property type="entry name" value="chitinase_GH19"/>
    <property type="match status" value="1"/>
</dbReference>
<dbReference type="CDD" id="cd06921">
    <property type="entry name" value="ChtBD1_GH19_hevein"/>
    <property type="match status" value="1"/>
</dbReference>
<dbReference type="FunFam" id="3.30.60.10:FF:000001">
    <property type="entry name" value="Basic endochitinase"/>
    <property type="match status" value="1"/>
</dbReference>
<dbReference type="FunFam" id="3.30.20.10:FF:000001">
    <property type="entry name" value="Endochitinase (Chitinase)"/>
    <property type="match status" value="1"/>
</dbReference>
<dbReference type="Gene3D" id="1.10.530.10">
    <property type="match status" value="1"/>
</dbReference>
<dbReference type="Gene3D" id="3.30.20.10">
    <property type="entry name" value="Endochitinase, domain 2"/>
    <property type="match status" value="1"/>
</dbReference>
<dbReference type="Gene3D" id="3.30.60.10">
    <property type="entry name" value="Endochitinase-like"/>
    <property type="match status" value="1"/>
</dbReference>
<dbReference type="InterPro" id="IPR001002">
    <property type="entry name" value="Chitin-bd_1"/>
</dbReference>
<dbReference type="InterPro" id="IPR018371">
    <property type="entry name" value="Chitin-binding_1_CS"/>
</dbReference>
<dbReference type="InterPro" id="IPR036861">
    <property type="entry name" value="Endochitinase-like_sf"/>
</dbReference>
<dbReference type="InterPro" id="IPR016283">
    <property type="entry name" value="Glyco_hydro_19"/>
</dbReference>
<dbReference type="InterPro" id="IPR000726">
    <property type="entry name" value="Glyco_hydro_19_cat"/>
</dbReference>
<dbReference type="InterPro" id="IPR023346">
    <property type="entry name" value="Lysozyme-like_dom_sf"/>
</dbReference>
<dbReference type="PANTHER" id="PTHR22595:SF140">
    <property type="entry name" value="CHITINASE 2"/>
    <property type="match status" value="1"/>
</dbReference>
<dbReference type="PANTHER" id="PTHR22595">
    <property type="entry name" value="CHITINASE-RELATED"/>
    <property type="match status" value="1"/>
</dbReference>
<dbReference type="Pfam" id="PF00187">
    <property type="entry name" value="Chitin_bind_1"/>
    <property type="match status" value="1"/>
</dbReference>
<dbReference type="Pfam" id="PF00182">
    <property type="entry name" value="Glyco_hydro_19"/>
    <property type="match status" value="1"/>
</dbReference>
<dbReference type="PIRSF" id="PIRSF001060">
    <property type="entry name" value="Endochitinase"/>
    <property type="match status" value="1"/>
</dbReference>
<dbReference type="PRINTS" id="PR00451">
    <property type="entry name" value="CHITINBINDNG"/>
</dbReference>
<dbReference type="SMART" id="SM00270">
    <property type="entry name" value="ChtBD1"/>
    <property type="match status" value="1"/>
</dbReference>
<dbReference type="SUPFAM" id="SSF53955">
    <property type="entry name" value="Lysozyme-like"/>
    <property type="match status" value="1"/>
</dbReference>
<dbReference type="SUPFAM" id="SSF57016">
    <property type="entry name" value="Plant lectins/antimicrobial peptides"/>
    <property type="match status" value="1"/>
</dbReference>
<dbReference type="PROSITE" id="PS00026">
    <property type="entry name" value="CHIT_BIND_I_1"/>
    <property type="match status" value="1"/>
</dbReference>
<dbReference type="PROSITE" id="PS50941">
    <property type="entry name" value="CHIT_BIND_I_2"/>
    <property type="match status" value="1"/>
</dbReference>
<dbReference type="PROSITE" id="PS00773">
    <property type="entry name" value="CHITINASE_19_1"/>
    <property type="match status" value="1"/>
</dbReference>
<dbReference type="PROSITE" id="PS00774">
    <property type="entry name" value="CHITINASE_19_2"/>
    <property type="match status" value="1"/>
</dbReference>
<proteinExistence type="evidence at protein level"/>
<comment type="function">
    <text evidence="4 7 8">Hydrolyzes chitin and plays a role in defense against fungal pathogens containing chitin. Its overexpression confers enhanced resistance to sheath blight pathogen (R.solani).</text>
</comment>
<comment type="catalytic activity">
    <reaction>
        <text>Random endo-hydrolysis of N-acetyl-beta-D-glucosaminide (1-&gt;4)-beta-linkages in chitin and chitodextrins.</text>
        <dbReference type="EC" id="3.2.1.14"/>
    </reaction>
</comment>
<comment type="tissue specificity">
    <text evidence="6">Expressed in roots, sheaths and meristems.</text>
</comment>
<comment type="similarity">
    <text evidence="9">Belongs to the glycosyl hydrolase 19 family. Chitinase class I subfamily.</text>
</comment>
<comment type="sequence caution" evidence="9">
    <conflict type="erroneous gene model prediction">
        <sequence resource="EMBL-CDS" id="BAF17390"/>
    </conflict>
</comment>
<reference key="1">
    <citation type="journal article" date="1993" name="Mol. Gen. Genet.">
        <title>Sequence variation, differential expression and chromosomal location of rice chitinase genes.</title>
        <authorList>
            <person name="Nishizawa Y."/>
            <person name="Kishimoto N."/>
            <person name="Saito A."/>
            <person name="Hibi T."/>
        </authorList>
    </citation>
    <scope>NUCLEOTIDE SEQUENCE [GENOMIC DNA / MRNA]</scope>
    <source>
        <strain>cv. Nipponbare</strain>
    </source>
</reference>
<reference key="2">
    <citation type="journal article" date="2005" name="Nature">
        <title>The map-based sequence of the rice genome.</title>
        <authorList>
            <consortium name="International rice genome sequencing project (IRGSP)"/>
        </authorList>
    </citation>
    <scope>NUCLEOTIDE SEQUENCE [LARGE SCALE GENOMIC DNA]</scope>
    <source>
        <strain>cv. Nipponbare</strain>
    </source>
</reference>
<reference key="3">
    <citation type="journal article" date="2008" name="Nucleic Acids Res.">
        <title>The rice annotation project database (RAP-DB): 2008 update.</title>
        <authorList>
            <consortium name="The rice annotation project (RAP)"/>
        </authorList>
    </citation>
    <scope>GENOME REANNOTATION</scope>
    <source>
        <strain>cv. Nipponbare</strain>
    </source>
</reference>
<reference key="4">
    <citation type="journal article" date="2013" name="Rice">
        <title>Improvement of the Oryza sativa Nipponbare reference genome using next generation sequence and optical map data.</title>
        <authorList>
            <person name="Kawahara Y."/>
            <person name="de la Bastide M."/>
            <person name="Hamilton J.P."/>
            <person name="Kanamori H."/>
            <person name="McCombie W.R."/>
            <person name="Ouyang S."/>
            <person name="Schwartz D.C."/>
            <person name="Tanaka T."/>
            <person name="Wu J."/>
            <person name="Zhou S."/>
            <person name="Childs K.L."/>
            <person name="Davidson R.M."/>
            <person name="Lin H."/>
            <person name="Quesada-Ocampo L."/>
            <person name="Vaillancourt B."/>
            <person name="Sakai H."/>
            <person name="Lee S.S."/>
            <person name="Kim J."/>
            <person name="Numa H."/>
            <person name="Itoh T."/>
            <person name="Buell C.R."/>
            <person name="Matsumoto T."/>
        </authorList>
    </citation>
    <scope>GENOME REANNOTATION</scope>
    <source>
        <strain>cv. Nipponbare</strain>
    </source>
</reference>
<reference key="5">
    <citation type="journal article" date="2005" name="PLoS Biol.">
        <title>The genomes of Oryza sativa: a history of duplications.</title>
        <authorList>
            <person name="Yu J."/>
            <person name="Wang J."/>
            <person name="Lin W."/>
            <person name="Li S."/>
            <person name="Li H."/>
            <person name="Zhou J."/>
            <person name="Ni P."/>
            <person name="Dong W."/>
            <person name="Hu S."/>
            <person name="Zeng C."/>
            <person name="Zhang J."/>
            <person name="Zhang Y."/>
            <person name="Li R."/>
            <person name="Xu Z."/>
            <person name="Li S."/>
            <person name="Li X."/>
            <person name="Zheng H."/>
            <person name="Cong L."/>
            <person name="Lin L."/>
            <person name="Yin J."/>
            <person name="Geng J."/>
            <person name="Li G."/>
            <person name="Shi J."/>
            <person name="Liu J."/>
            <person name="Lv H."/>
            <person name="Li J."/>
            <person name="Wang J."/>
            <person name="Deng Y."/>
            <person name="Ran L."/>
            <person name="Shi X."/>
            <person name="Wang X."/>
            <person name="Wu Q."/>
            <person name="Li C."/>
            <person name="Ren X."/>
            <person name="Wang J."/>
            <person name="Wang X."/>
            <person name="Li D."/>
            <person name="Liu D."/>
            <person name="Zhang X."/>
            <person name="Ji Z."/>
            <person name="Zhao W."/>
            <person name="Sun Y."/>
            <person name="Zhang Z."/>
            <person name="Bao J."/>
            <person name="Han Y."/>
            <person name="Dong L."/>
            <person name="Ji J."/>
            <person name="Chen P."/>
            <person name="Wu S."/>
            <person name="Liu J."/>
            <person name="Xiao Y."/>
            <person name="Bu D."/>
            <person name="Tan J."/>
            <person name="Yang L."/>
            <person name="Ye C."/>
            <person name="Zhang J."/>
            <person name="Xu J."/>
            <person name="Zhou Y."/>
            <person name="Yu Y."/>
            <person name="Zhang B."/>
            <person name="Zhuang S."/>
            <person name="Wei H."/>
            <person name="Liu B."/>
            <person name="Lei M."/>
            <person name="Yu H."/>
            <person name="Li Y."/>
            <person name="Xu H."/>
            <person name="Wei S."/>
            <person name="He X."/>
            <person name="Fang L."/>
            <person name="Zhang Z."/>
            <person name="Zhang Y."/>
            <person name="Huang X."/>
            <person name="Su Z."/>
            <person name="Tong W."/>
            <person name="Li J."/>
            <person name="Tong Z."/>
            <person name="Li S."/>
            <person name="Ye J."/>
            <person name="Wang L."/>
            <person name="Fang L."/>
            <person name="Lei T."/>
            <person name="Chen C.-S."/>
            <person name="Chen H.-C."/>
            <person name="Xu Z."/>
            <person name="Li H."/>
            <person name="Huang H."/>
            <person name="Zhang F."/>
            <person name="Xu H."/>
            <person name="Li N."/>
            <person name="Zhao C."/>
            <person name="Li S."/>
            <person name="Dong L."/>
            <person name="Huang Y."/>
            <person name="Li L."/>
            <person name="Xi Y."/>
            <person name="Qi Q."/>
            <person name="Li W."/>
            <person name="Zhang B."/>
            <person name="Hu W."/>
            <person name="Zhang Y."/>
            <person name="Tian X."/>
            <person name="Jiao Y."/>
            <person name="Liang X."/>
            <person name="Jin J."/>
            <person name="Gao L."/>
            <person name="Zheng W."/>
            <person name="Hao B."/>
            <person name="Liu S.-M."/>
            <person name="Wang W."/>
            <person name="Yuan L."/>
            <person name="Cao M."/>
            <person name="McDermott J."/>
            <person name="Samudrala R."/>
            <person name="Wang J."/>
            <person name="Wong G.K.-S."/>
            <person name="Yang H."/>
        </authorList>
    </citation>
    <scope>NUCLEOTIDE SEQUENCE [LARGE SCALE GENOMIC DNA]</scope>
    <source>
        <strain>cv. Nipponbare</strain>
    </source>
</reference>
<reference key="6">
    <citation type="journal article" date="2001" name="Plant Sci.">
        <title>Enhanced resistance to sheath blight by constitutive expression of infection-related rice chitinase in transgenic elite indica rice cultivars.</title>
        <authorList>
            <person name="Datta K."/>
            <person name="Tu J."/>
            <person name="Oliva N."/>
            <person name="Ona I."/>
            <person name="Velazhahan R."/>
            <person name="Mew T.W."/>
            <person name="Muthukrishnan S."/>
            <person name="Datta S.K."/>
        </authorList>
    </citation>
    <scope>FUNCTION</scope>
</reference>
<reference key="7">
    <citation type="journal article" date="2006" name="Genome">
        <title>Distribution, structure, organ-specific expression, and phylogenic analysis of the pathogenesis-related protein-3 chitinase gene family in rice (Oryza sativa L.).</title>
        <authorList>
            <person name="Nakazaki T."/>
            <person name="Tsukiyama T."/>
            <person name="Okumoto Y."/>
            <person name="Kageyama D."/>
            <person name="Naito K."/>
            <person name="Inouye K."/>
            <person name="Tanisaka T."/>
        </authorList>
    </citation>
    <scope>GENE FAMILY</scope>
    <scope>NOMENCLATURE</scope>
    <scope>TISSUE SPECIFICITY</scope>
</reference>
<reference key="8">
    <citation type="journal article" date="2008" name="Biosci. Biotechnol. Biochem.">
        <title>Purification and characterization of a rice class I chitinase, OsChia1b, produced in Esherichia coli.</title>
        <authorList>
            <person name="Mizuno R."/>
            <person name="Itoh Y."/>
            <person name="Nishizawa Y."/>
            <person name="Kezuka Y."/>
            <person name="Suzuki K."/>
            <person name="Nonaka T."/>
            <person name="Watanabe T."/>
        </authorList>
    </citation>
    <scope>FUNCTION</scope>
</reference>
<reference key="9">
    <citation type="journal article" date="2008" name="J. Biochem.">
        <title>Role of the loop structure of the catalytic domain in rice class I chitinase.</title>
        <authorList>
            <person name="Mizuno R."/>
            <person name="Fukamizo T."/>
            <person name="Sugiyama S."/>
            <person name="Nishizawa Y."/>
            <person name="Kezuka Y."/>
            <person name="Nonaka T."/>
            <person name="Suzuki K."/>
            <person name="Watanabe T."/>
        </authorList>
    </citation>
    <scope>FUNCTION</scope>
    <scope>MUTAGENESIS OF TRP-159</scope>
</reference>
<reference key="10">
    <citation type="journal article" date="2004" name="Protein Pept. Lett.">
        <title>Crystallization and preliminary X-ray analysis of plant class I chitinase from rice.</title>
        <authorList>
            <person name="Kezuka Y."/>
            <person name="Kitazaki K."/>
            <person name="Itoh Y."/>
            <person name="Watanabe J."/>
            <person name="Takaha O."/>
            <person name="Watanabe T."/>
            <person name="Nishizawa Y."/>
            <person name="Nonaka T."/>
        </authorList>
    </citation>
    <scope>X-RAY CRYSTALLOGRAPHY (2.0 ANGSTROMS) OF 33-340</scope>
    <scope>DISULFIDE BONDS</scope>
</reference>
<gene>
    <name type="primary">Cht2</name>
    <name type="synonym">RC7</name>
    <name type="ordered locus">Os05g0399300</name>
    <name type="ordered locus">LOC_Os05g33130</name>
    <name type="ORF">OsJ_18467</name>
</gene>
<keyword id="KW-0002">3D-structure</keyword>
<keyword id="KW-0119">Carbohydrate metabolism</keyword>
<keyword id="KW-0146">Chitin degradation</keyword>
<keyword id="KW-0147">Chitin-binding</keyword>
<keyword id="KW-1015">Disulfide bond</keyword>
<keyword id="KW-0326">Glycosidase</keyword>
<keyword id="KW-0378">Hydrolase</keyword>
<keyword id="KW-0611">Plant defense</keyword>
<keyword id="KW-0624">Polysaccharide degradation</keyword>
<keyword id="KW-1185">Reference proteome</keyword>
<keyword id="KW-0732">Signal</keyword>
<feature type="signal peptide" evidence="2">
    <location>
        <begin position="1"/>
        <end position="32"/>
    </location>
</feature>
<feature type="chain" id="PRO_5000139669" description="Chitinase 2">
    <location>
        <begin position="33"/>
        <end position="340"/>
    </location>
</feature>
<feature type="domain" description="Chitin-binding type-1" evidence="3">
    <location>
        <begin position="33"/>
        <end position="73"/>
    </location>
</feature>
<feature type="active site" description="Proton donor" evidence="1">
    <location>
        <position position="154"/>
    </location>
</feature>
<feature type="disulfide bond" evidence="3 5">
    <location>
        <begin position="35"/>
        <end position="50"/>
    </location>
</feature>
<feature type="disulfide bond" evidence="3 5">
    <location>
        <begin position="44"/>
        <end position="56"/>
    </location>
</feature>
<feature type="disulfide bond" evidence="3 5">
    <location>
        <begin position="47"/>
        <end position="74"/>
    </location>
</feature>
<feature type="disulfide bond" evidence="3 5">
    <location>
        <begin position="49"/>
        <end position="63"/>
    </location>
</feature>
<feature type="disulfide bond" evidence="3 5">
    <location>
        <begin position="67"/>
        <end position="71"/>
    </location>
</feature>
<feature type="disulfide bond" evidence="3 5">
    <location>
        <begin position="110"/>
        <end position="172"/>
    </location>
</feature>
<feature type="disulfide bond" evidence="3 5">
    <location>
        <begin position="184"/>
        <end position="192"/>
    </location>
</feature>
<feature type="disulfide bond" evidence="3 5">
    <location>
        <begin position="291"/>
        <end position="323"/>
    </location>
</feature>
<feature type="mutagenesis site" description="Increased activity." evidence="7">
    <original>W</original>
    <variation>A</variation>
    <location>
        <position position="159"/>
    </location>
</feature>
<feature type="turn" evidence="10">
    <location>
        <begin position="37"/>
        <end position="41"/>
    </location>
</feature>
<feature type="helix" evidence="10">
    <location>
        <begin position="45"/>
        <end position="47"/>
    </location>
</feature>
<feature type="strand" evidence="10">
    <location>
        <begin position="54"/>
        <end position="59"/>
    </location>
</feature>
<feature type="helix" evidence="10">
    <location>
        <begin position="60"/>
        <end position="63"/>
    </location>
</feature>
<feature type="helix" evidence="10">
    <location>
        <begin position="89"/>
        <end position="91"/>
    </location>
</feature>
<feature type="helix" evidence="10">
    <location>
        <begin position="95"/>
        <end position="101"/>
    </location>
</feature>
<feature type="turn" evidence="10">
    <location>
        <begin position="102"/>
        <end position="106"/>
    </location>
</feature>
<feature type="turn" evidence="10">
    <location>
        <begin position="111"/>
        <end position="114"/>
    </location>
</feature>
<feature type="helix" evidence="10">
    <location>
        <begin position="118"/>
        <end position="126"/>
    </location>
</feature>
<feature type="turn" evidence="10">
    <location>
        <begin position="129"/>
        <end position="132"/>
    </location>
</feature>
<feature type="strand" evidence="10">
    <location>
        <begin position="134"/>
        <end position="136"/>
    </location>
</feature>
<feature type="helix" evidence="10">
    <location>
        <begin position="137"/>
        <end position="155"/>
    </location>
</feature>
<feature type="helix" evidence="10">
    <location>
        <begin position="166"/>
        <end position="168"/>
    </location>
</feature>
<feature type="strand" evidence="10">
    <location>
        <begin position="188"/>
        <end position="190"/>
    </location>
</feature>
<feature type="turn" evidence="10">
    <location>
        <begin position="202"/>
        <end position="205"/>
    </location>
</feature>
<feature type="helix" evidence="10">
    <location>
        <begin position="209"/>
        <end position="219"/>
    </location>
</feature>
<feature type="turn" evidence="10">
    <location>
        <begin position="223"/>
        <end position="225"/>
    </location>
</feature>
<feature type="helix" evidence="10">
    <location>
        <begin position="229"/>
        <end position="232"/>
    </location>
</feature>
<feature type="helix" evidence="10">
    <location>
        <begin position="234"/>
        <end position="246"/>
    </location>
</feature>
<feature type="helix" evidence="10">
    <location>
        <begin position="255"/>
        <end position="259"/>
    </location>
</feature>
<feature type="helix" evidence="10">
    <location>
        <begin position="267"/>
        <end position="271"/>
    </location>
</feature>
<feature type="helix" evidence="10">
    <location>
        <begin position="278"/>
        <end position="290"/>
    </location>
</feature>
<feature type="strand" evidence="10">
    <location>
        <begin position="291"/>
        <end position="294"/>
    </location>
</feature>
<feature type="helix" evidence="10">
    <location>
        <begin position="297"/>
        <end position="312"/>
    </location>
</feature>